<organismHost>
    <name type="scientific">Cucurbita pepo</name>
    <name type="common">Vegetable marrow</name>
    <name type="synonym">Summer squash</name>
    <dbReference type="NCBI Taxonomy" id="3663"/>
</organismHost>
<organismHost>
    <name type="scientific">Nicotiana tabacum</name>
    <name type="common">Common tobacco</name>
    <dbReference type="NCBI Taxonomy" id="4097"/>
</organismHost>
<feature type="chain" id="PRO_0000083236" description="Movement protein">
    <location>
        <begin position="1"/>
        <end position="279"/>
    </location>
</feature>
<feature type="region of interest" description="Disordered" evidence="2">
    <location>
        <begin position="246"/>
        <end position="279"/>
    </location>
</feature>
<feature type="compositionally biased region" description="Low complexity" evidence="2">
    <location>
        <begin position="254"/>
        <end position="268"/>
    </location>
</feature>
<reference key="1">
    <citation type="journal article" date="1990" name="J. Gen. Virol.">
        <title>Nucleotide sequence and evolutionary relationships of cucumber mosaic virus (CMV) strains: CMV RNA 3.</title>
        <authorList>
            <person name="Owen J."/>
            <person name="Shintaku M."/>
            <person name="Aeschleman P."/>
            <person name="Tahar S."/>
            <person name="Palukaitis P."/>
        </authorList>
    </citation>
    <scope>NUCLEOTIDE SEQUENCE [GENOMIC RNA]</scope>
</reference>
<keyword id="KW-1031">Host cell junction</keyword>
<keyword id="KW-1185">Reference proteome</keyword>
<keyword id="KW-0813">Transport</keyword>
<keyword id="KW-0916">Viral movement protein</keyword>
<dbReference type="EMBL" id="D10538">
    <property type="protein sequence ID" value="BAA01396.1"/>
    <property type="molecule type" value="Genomic_RNA"/>
</dbReference>
<dbReference type="KEGG" id="vg:962639"/>
<dbReference type="Proteomes" id="UP000002502">
    <property type="component" value="Genome"/>
</dbReference>
<dbReference type="GO" id="GO:0044219">
    <property type="term" value="C:host cell plasmodesma"/>
    <property type="evidence" value="ECO:0007669"/>
    <property type="project" value="UniProtKB-SubCell"/>
</dbReference>
<dbReference type="GO" id="GO:0046740">
    <property type="term" value="P:transport of virus in host, cell to cell"/>
    <property type="evidence" value="ECO:0007669"/>
    <property type="project" value="UniProtKB-KW"/>
</dbReference>
<dbReference type="InterPro" id="IPR000603">
    <property type="entry name" value="MPV"/>
</dbReference>
<dbReference type="Pfam" id="PF00803">
    <property type="entry name" value="3A"/>
    <property type="match status" value="1"/>
</dbReference>
<comment type="function">
    <text evidence="1">Transports viral genome to neighboring plant cells directly through plasmosdesmata, without any budding. The movement protein allows efficient cell to cell propagation, by bypassing the host cell wall barrier. Acts by forming a tubular structure at the host plasmodesmata, enlarging it enough to allow free passage of virion capsids (By similarity).</text>
</comment>
<comment type="subcellular location">
    <subcellularLocation>
        <location evidence="1">Host cell junction</location>
        <location evidence="1">Host plasmodesma</location>
    </subcellularLocation>
    <text evidence="1">Assembles into long tubular structures at the surface of the infected protoplast.</text>
</comment>
<comment type="similarity">
    <text evidence="3">Belongs to the cucumovirus movement protein family.</text>
</comment>
<organism>
    <name type="scientific">Cucumber mosaic virus (strain FNY)</name>
    <name type="common">CMV</name>
    <dbReference type="NCBI Taxonomy" id="12307"/>
    <lineage>
        <taxon>Viruses</taxon>
        <taxon>Riboviria</taxon>
        <taxon>Orthornavirae</taxon>
        <taxon>Kitrinoviricota</taxon>
        <taxon>Alsuviricetes</taxon>
        <taxon>Martellivirales</taxon>
        <taxon>Bromoviridae</taxon>
        <taxon>Cucumovirus</taxon>
        <taxon>Cucumber mosaic virus</taxon>
    </lineage>
</organism>
<evidence type="ECO:0000250" key="1"/>
<evidence type="ECO:0000256" key="2">
    <source>
        <dbReference type="SAM" id="MobiDB-lite"/>
    </source>
</evidence>
<evidence type="ECO:0000305" key="3"/>
<sequence length="279" mass="30461">MAFQGTSRTLTQQSSAATSDDLQKILFSPEAIKKMATECDLGRHHWMRADNAISVRPLVPEVTHGRIASFFKSGYDVGELCSKGYMSVPQVLCAVTRTVSTDAEGSLRIYLADLGDKELSPIDGQCVSLHNHDLPALVSFQPTYDCPMETVGNRKRCFAVVIERHGYIGYTGTTASVCSNWQARFSSKNNNYTHIAAGKTLVLPFNRLAEQTKPSAVARLLKSQLNNIESSQYLLTNAKINQNARSESEDLNVESPPAAIGSSSASRSEAFRPQVVNGL</sequence>
<proteinExistence type="inferred from homology"/>
<protein>
    <recommendedName>
        <fullName>Movement protein</fullName>
        <shortName>MP</shortName>
    </recommendedName>
    <alternativeName>
        <fullName>Protein 3A</fullName>
    </alternativeName>
</protein>
<gene>
    <name type="ORF">ORF3a</name>
</gene>
<name>MVP_CMVFN</name>
<accession>Q00271</accession>